<comment type="function">
    <text evidence="1">Binds directly to 23S rRNA. The L1 stalk is quite mobile in the ribosome, and is involved in E site tRNA release.</text>
</comment>
<comment type="function">
    <text evidence="1">Protein L1 is also a translational repressor protein, it controls the translation of the L11 operon by binding to its mRNA.</text>
</comment>
<comment type="subunit">
    <text evidence="1">Part of the 50S ribosomal subunit.</text>
</comment>
<comment type="similarity">
    <text evidence="1">Belongs to the universal ribosomal protein uL1 family.</text>
</comment>
<accession>A4SUV1</accession>
<feature type="chain" id="PRO_1000086297" description="Large ribosomal subunit protein uL1">
    <location>
        <begin position="1"/>
        <end position="233"/>
    </location>
</feature>
<organism>
    <name type="scientific">Polynucleobacter asymbioticus (strain DSM 18221 / CIP 109841 / QLW-P1DMWA-1)</name>
    <name type="common">Polynucleobacter necessarius subsp. asymbioticus</name>
    <dbReference type="NCBI Taxonomy" id="312153"/>
    <lineage>
        <taxon>Bacteria</taxon>
        <taxon>Pseudomonadati</taxon>
        <taxon>Pseudomonadota</taxon>
        <taxon>Betaproteobacteria</taxon>
        <taxon>Burkholderiales</taxon>
        <taxon>Burkholderiaceae</taxon>
        <taxon>Polynucleobacter</taxon>
    </lineage>
</organism>
<name>RL1_POLAQ</name>
<sequence length="233" mass="24406">MTKLSKRVKAIQSKVDRNKFYPLEDALNLVKECATAKFDESIDVAVQLGIDAKKSDQVVRGAVVLPAGTGKHVRVAVFAQGEKAEQAKAAGAEIVGMEELAEQIKGGKIDFDILIASPDTMKIVGTLGQVLGPRGLMPNPKVGTVTPDVATAVKNAKAGQVQFRVDKAGIVHASIGRRSFEPAALKSNLLALLEALNKAKPPASKGIYLKKVAVSSTMGAGVRVDQASLQAAA</sequence>
<gene>
    <name evidence="1" type="primary">rplA</name>
    <name type="ordered locus">Pnuc_0043</name>
</gene>
<keyword id="KW-1185">Reference proteome</keyword>
<keyword id="KW-0678">Repressor</keyword>
<keyword id="KW-0687">Ribonucleoprotein</keyword>
<keyword id="KW-0689">Ribosomal protein</keyword>
<keyword id="KW-0694">RNA-binding</keyword>
<keyword id="KW-0699">rRNA-binding</keyword>
<keyword id="KW-0810">Translation regulation</keyword>
<keyword id="KW-0820">tRNA-binding</keyword>
<reference key="1">
    <citation type="journal article" date="2012" name="Stand. Genomic Sci.">
        <title>Complete genome sequence of Polynucleobacter necessarius subsp. asymbioticus type strain (QLW-P1DMWA-1(T)).</title>
        <authorList>
            <person name="Meincke L."/>
            <person name="Copeland A."/>
            <person name="Lapidus A."/>
            <person name="Lucas S."/>
            <person name="Berry K.W."/>
            <person name="Del Rio T.G."/>
            <person name="Hammon N."/>
            <person name="Dalin E."/>
            <person name="Tice H."/>
            <person name="Pitluck S."/>
            <person name="Richardson P."/>
            <person name="Bruce D."/>
            <person name="Goodwin L."/>
            <person name="Han C."/>
            <person name="Tapia R."/>
            <person name="Detter J.C."/>
            <person name="Schmutz J."/>
            <person name="Brettin T."/>
            <person name="Larimer F."/>
            <person name="Land M."/>
            <person name="Hauser L."/>
            <person name="Kyrpides N.C."/>
            <person name="Ivanova N."/>
            <person name="Goker M."/>
            <person name="Woyke T."/>
            <person name="Wu Q.L."/>
            <person name="Pockl M."/>
            <person name="Hahn M.W."/>
            <person name="Klenk H.P."/>
        </authorList>
    </citation>
    <scope>NUCLEOTIDE SEQUENCE [LARGE SCALE GENOMIC DNA]</scope>
    <source>
        <strain>DSM 18221 / CIP 109841 / QLW-P1DMWA-1</strain>
    </source>
</reference>
<proteinExistence type="inferred from homology"/>
<evidence type="ECO:0000255" key="1">
    <source>
        <dbReference type="HAMAP-Rule" id="MF_01318"/>
    </source>
</evidence>
<evidence type="ECO:0000305" key="2"/>
<protein>
    <recommendedName>
        <fullName evidence="1">Large ribosomal subunit protein uL1</fullName>
    </recommendedName>
    <alternativeName>
        <fullName evidence="2">50S ribosomal protein L1</fullName>
    </alternativeName>
</protein>
<dbReference type="EMBL" id="CP000655">
    <property type="protein sequence ID" value="ABP33265.1"/>
    <property type="molecule type" value="Genomic_DNA"/>
</dbReference>
<dbReference type="RefSeq" id="WP_011901891.1">
    <property type="nucleotide sequence ID" value="NC_009379.1"/>
</dbReference>
<dbReference type="SMR" id="A4SUV1"/>
<dbReference type="GeneID" id="31480389"/>
<dbReference type="KEGG" id="pnu:Pnuc_0043"/>
<dbReference type="eggNOG" id="COG0081">
    <property type="taxonomic scope" value="Bacteria"/>
</dbReference>
<dbReference type="HOGENOM" id="CLU_062853_0_0_4"/>
<dbReference type="Proteomes" id="UP000000231">
    <property type="component" value="Chromosome"/>
</dbReference>
<dbReference type="GO" id="GO:0022625">
    <property type="term" value="C:cytosolic large ribosomal subunit"/>
    <property type="evidence" value="ECO:0007669"/>
    <property type="project" value="TreeGrafter"/>
</dbReference>
<dbReference type="GO" id="GO:0019843">
    <property type="term" value="F:rRNA binding"/>
    <property type="evidence" value="ECO:0007669"/>
    <property type="project" value="UniProtKB-UniRule"/>
</dbReference>
<dbReference type="GO" id="GO:0003735">
    <property type="term" value="F:structural constituent of ribosome"/>
    <property type="evidence" value="ECO:0007669"/>
    <property type="project" value="InterPro"/>
</dbReference>
<dbReference type="GO" id="GO:0000049">
    <property type="term" value="F:tRNA binding"/>
    <property type="evidence" value="ECO:0007669"/>
    <property type="project" value="UniProtKB-KW"/>
</dbReference>
<dbReference type="GO" id="GO:0006417">
    <property type="term" value="P:regulation of translation"/>
    <property type="evidence" value="ECO:0007669"/>
    <property type="project" value="UniProtKB-KW"/>
</dbReference>
<dbReference type="GO" id="GO:0006412">
    <property type="term" value="P:translation"/>
    <property type="evidence" value="ECO:0007669"/>
    <property type="project" value="UniProtKB-UniRule"/>
</dbReference>
<dbReference type="CDD" id="cd00403">
    <property type="entry name" value="Ribosomal_L1"/>
    <property type="match status" value="1"/>
</dbReference>
<dbReference type="FunFam" id="3.40.50.790:FF:000001">
    <property type="entry name" value="50S ribosomal protein L1"/>
    <property type="match status" value="1"/>
</dbReference>
<dbReference type="Gene3D" id="3.30.190.20">
    <property type="match status" value="1"/>
</dbReference>
<dbReference type="Gene3D" id="3.40.50.790">
    <property type="match status" value="1"/>
</dbReference>
<dbReference type="HAMAP" id="MF_01318_B">
    <property type="entry name" value="Ribosomal_uL1_B"/>
    <property type="match status" value="1"/>
</dbReference>
<dbReference type="InterPro" id="IPR005878">
    <property type="entry name" value="Ribosom_uL1_bac-type"/>
</dbReference>
<dbReference type="InterPro" id="IPR002143">
    <property type="entry name" value="Ribosomal_uL1"/>
</dbReference>
<dbReference type="InterPro" id="IPR023674">
    <property type="entry name" value="Ribosomal_uL1-like"/>
</dbReference>
<dbReference type="InterPro" id="IPR028364">
    <property type="entry name" value="Ribosomal_uL1/biogenesis"/>
</dbReference>
<dbReference type="InterPro" id="IPR016095">
    <property type="entry name" value="Ribosomal_uL1_3-a/b-sand"/>
</dbReference>
<dbReference type="InterPro" id="IPR023673">
    <property type="entry name" value="Ribosomal_uL1_CS"/>
</dbReference>
<dbReference type="NCBIfam" id="TIGR01169">
    <property type="entry name" value="rplA_bact"/>
    <property type="match status" value="1"/>
</dbReference>
<dbReference type="PANTHER" id="PTHR36427">
    <property type="entry name" value="54S RIBOSOMAL PROTEIN L1, MITOCHONDRIAL"/>
    <property type="match status" value="1"/>
</dbReference>
<dbReference type="PANTHER" id="PTHR36427:SF3">
    <property type="entry name" value="LARGE RIBOSOMAL SUBUNIT PROTEIN UL1M"/>
    <property type="match status" value="1"/>
</dbReference>
<dbReference type="Pfam" id="PF00687">
    <property type="entry name" value="Ribosomal_L1"/>
    <property type="match status" value="1"/>
</dbReference>
<dbReference type="PIRSF" id="PIRSF002155">
    <property type="entry name" value="Ribosomal_L1"/>
    <property type="match status" value="1"/>
</dbReference>
<dbReference type="SUPFAM" id="SSF56808">
    <property type="entry name" value="Ribosomal protein L1"/>
    <property type="match status" value="1"/>
</dbReference>
<dbReference type="PROSITE" id="PS01199">
    <property type="entry name" value="RIBOSOMAL_L1"/>
    <property type="match status" value="1"/>
</dbReference>